<protein>
    <recommendedName>
        <fullName>Deleted in azoospermia-like</fullName>
        <shortName>DAZ-like protein</shortName>
    </recommendedName>
</protein>
<comment type="function">
    <text evidence="1">RNA-binding protein, which probably plays a central role in gametogenesis in both males and females. Acts by binding to the 3'-UTR of mRNA, specifically recognizing GUU triplets, and promoting the translation of key transcripts (By similarity).</text>
</comment>
<comment type="subcellular location">
    <subcellularLocation>
        <location evidence="2">Cytoplasm</location>
    </subcellularLocation>
</comment>
<comment type="similarity">
    <text evidence="4">Belongs to the RRM DAZ family.</text>
</comment>
<gene>
    <name type="primary">DAZL</name>
</gene>
<accession>Q804A9</accession>
<dbReference type="EMBL" id="AY211387">
    <property type="protein sequence ID" value="AAO26019.1"/>
    <property type="molecule type" value="mRNA"/>
</dbReference>
<dbReference type="RefSeq" id="NP_989549.1">
    <property type="nucleotide sequence ID" value="NM_204218.2"/>
</dbReference>
<dbReference type="RefSeq" id="XP_040530136.1">
    <property type="nucleotide sequence ID" value="XM_040674202.2"/>
</dbReference>
<dbReference type="RefSeq" id="XP_040530145.1">
    <property type="nucleotide sequence ID" value="XM_040674211.2"/>
</dbReference>
<dbReference type="RefSeq" id="XP_046766151.1">
    <property type="nucleotide sequence ID" value="XM_046910195.1"/>
</dbReference>
<dbReference type="RefSeq" id="XP_046766152.1">
    <property type="nucleotide sequence ID" value="XM_046910196.1"/>
</dbReference>
<dbReference type="RefSeq" id="XP_046766153.1">
    <property type="nucleotide sequence ID" value="XM_046910197.1"/>
</dbReference>
<dbReference type="SMR" id="Q804A9"/>
<dbReference type="FunCoup" id="Q804A9">
    <property type="interactions" value="135"/>
</dbReference>
<dbReference type="STRING" id="9031.ENSGALP00000018319"/>
<dbReference type="PaxDb" id="9031-ENSGALP00000043122"/>
<dbReference type="Ensembl" id="ENSGALT00010005201.1">
    <property type="protein sequence ID" value="ENSGALP00010003067.1"/>
    <property type="gene ID" value="ENSGALG00010002294.1"/>
</dbReference>
<dbReference type="Ensembl" id="ENSGALT00010005216.1">
    <property type="protein sequence ID" value="ENSGALP00010003077.1"/>
    <property type="gene ID" value="ENSGALG00010002294.1"/>
</dbReference>
<dbReference type="GeneID" id="374054"/>
<dbReference type="KEGG" id="gga:374054"/>
<dbReference type="CTD" id="1618"/>
<dbReference type="VEuPathDB" id="HostDB:geneid_374054"/>
<dbReference type="eggNOG" id="KOG0118">
    <property type="taxonomic scope" value="Eukaryota"/>
</dbReference>
<dbReference type="GeneTree" id="ENSGT00530000063480"/>
<dbReference type="InParanoid" id="Q804A9"/>
<dbReference type="OrthoDB" id="762982at2759"/>
<dbReference type="PhylomeDB" id="Q804A9"/>
<dbReference type="PRO" id="PR:Q804A9"/>
<dbReference type="Proteomes" id="UP000000539">
    <property type="component" value="Chromosome 2"/>
</dbReference>
<dbReference type="GO" id="GO:0005737">
    <property type="term" value="C:cytoplasm"/>
    <property type="evidence" value="ECO:0000250"/>
    <property type="project" value="UniProtKB"/>
</dbReference>
<dbReference type="GO" id="GO:0005634">
    <property type="term" value="C:nucleus"/>
    <property type="evidence" value="ECO:0007669"/>
    <property type="project" value="Ensembl"/>
</dbReference>
<dbReference type="GO" id="GO:0005840">
    <property type="term" value="C:ribosome"/>
    <property type="evidence" value="ECO:0007669"/>
    <property type="project" value="Ensembl"/>
</dbReference>
<dbReference type="GO" id="GO:0042802">
    <property type="term" value="F:identical protein binding"/>
    <property type="evidence" value="ECO:0007669"/>
    <property type="project" value="Ensembl"/>
</dbReference>
<dbReference type="GO" id="GO:0003730">
    <property type="term" value="F:mRNA 3'-UTR binding"/>
    <property type="evidence" value="ECO:0000318"/>
    <property type="project" value="GO_Central"/>
</dbReference>
<dbReference type="GO" id="GO:0008494">
    <property type="term" value="F:translation activator activity"/>
    <property type="evidence" value="ECO:0000318"/>
    <property type="project" value="GO_Central"/>
</dbReference>
<dbReference type="GO" id="GO:0070935">
    <property type="term" value="P:3'-UTR-mediated mRNA stabilization"/>
    <property type="evidence" value="ECO:0000318"/>
    <property type="project" value="GO_Central"/>
</dbReference>
<dbReference type="GO" id="GO:0007147">
    <property type="term" value="P:female meiosis II"/>
    <property type="evidence" value="ECO:0007669"/>
    <property type="project" value="Ensembl"/>
</dbReference>
<dbReference type="GO" id="GO:0001556">
    <property type="term" value="P:oocyte maturation"/>
    <property type="evidence" value="ECO:0007669"/>
    <property type="project" value="Ensembl"/>
</dbReference>
<dbReference type="GO" id="GO:0045836">
    <property type="term" value="P:positive regulation of meiotic nuclear division"/>
    <property type="evidence" value="ECO:0007669"/>
    <property type="project" value="Ensembl"/>
</dbReference>
<dbReference type="GO" id="GO:0045948">
    <property type="term" value="P:positive regulation of translational initiation"/>
    <property type="evidence" value="ECO:0000318"/>
    <property type="project" value="GO_Central"/>
</dbReference>
<dbReference type="GO" id="GO:0007283">
    <property type="term" value="P:spermatogenesis"/>
    <property type="evidence" value="ECO:0007669"/>
    <property type="project" value="UniProtKB-KW"/>
</dbReference>
<dbReference type="CDD" id="cd12672">
    <property type="entry name" value="RRM_DAZL"/>
    <property type="match status" value="1"/>
</dbReference>
<dbReference type="FunFam" id="3.30.70.330:FF:000180">
    <property type="entry name" value="Deleted in azoospermia-like"/>
    <property type="match status" value="1"/>
</dbReference>
<dbReference type="Gene3D" id="3.30.70.330">
    <property type="match status" value="1"/>
</dbReference>
<dbReference type="InterPro" id="IPR043628">
    <property type="entry name" value="DAZ_dom"/>
</dbReference>
<dbReference type="InterPro" id="IPR037551">
    <property type="entry name" value="DAZ_RRM_vert"/>
</dbReference>
<dbReference type="InterPro" id="IPR012677">
    <property type="entry name" value="Nucleotide-bd_a/b_plait_sf"/>
</dbReference>
<dbReference type="InterPro" id="IPR035979">
    <property type="entry name" value="RBD_domain_sf"/>
</dbReference>
<dbReference type="InterPro" id="IPR000504">
    <property type="entry name" value="RRM_dom"/>
</dbReference>
<dbReference type="PANTHER" id="PTHR11176">
    <property type="entry name" value="BOULE-RELATED"/>
    <property type="match status" value="1"/>
</dbReference>
<dbReference type="PANTHER" id="PTHR11176:SF4">
    <property type="entry name" value="DELETED IN AZOOSPERMIA-LIKE"/>
    <property type="match status" value="1"/>
</dbReference>
<dbReference type="Pfam" id="PF00076">
    <property type="entry name" value="RRM_1"/>
    <property type="match status" value="1"/>
</dbReference>
<dbReference type="SMART" id="SM00360">
    <property type="entry name" value="RRM"/>
    <property type="match status" value="1"/>
</dbReference>
<dbReference type="SUPFAM" id="SSF54928">
    <property type="entry name" value="RNA-binding domain, RBD"/>
    <property type="match status" value="1"/>
</dbReference>
<dbReference type="PROSITE" id="PS51890">
    <property type="entry name" value="DAZ"/>
    <property type="match status" value="1"/>
</dbReference>
<dbReference type="PROSITE" id="PS50102">
    <property type="entry name" value="RRM"/>
    <property type="match status" value="1"/>
</dbReference>
<sequence length="289" mass="32717">MSANAEAQCGSISEDNTHSSTTCQGYVLPEGKIMPNTVFVGGIDIRMNEAEIRSYFEQYGTVKEVKIITDRTGVSKGYGFVSFLDNVDVQKIVESQISVHGKRLKLGPAIRKQQNLCSYMQPRPLAFNPPAPQFHSVWTNQNTETYVQPQAVVSPLTQYVQTYAYSSPAVLIQQQVPVGYQPAYNYQAPPQWVPGEQRNYVMPPVYTSVNYHYSEDPEFIQTECAVPEPTQMSGNSPQKKSVDRSIQTVVSCLFNPENRLRNTFVSQEDYFRERRAHHFRKGRAVLKSV</sequence>
<evidence type="ECO:0000250" key="1"/>
<evidence type="ECO:0000250" key="2">
    <source>
        <dbReference type="UniProtKB" id="Q92904"/>
    </source>
</evidence>
<evidence type="ECO:0000255" key="3">
    <source>
        <dbReference type="PROSITE-ProRule" id="PRU00176"/>
    </source>
</evidence>
<evidence type="ECO:0000255" key="4">
    <source>
        <dbReference type="PROSITE-ProRule" id="PRU01238"/>
    </source>
</evidence>
<evidence type="ECO:0000256" key="5">
    <source>
        <dbReference type="SAM" id="MobiDB-lite"/>
    </source>
</evidence>
<proteinExistence type="evidence at transcript level"/>
<keyword id="KW-0963">Cytoplasm</keyword>
<keyword id="KW-0217">Developmental protein</keyword>
<keyword id="KW-0221">Differentiation</keyword>
<keyword id="KW-0896">Oogenesis</keyword>
<keyword id="KW-1185">Reference proteome</keyword>
<keyword id="KW-0694">RNA-binding</keyword>
<keyword id="KW-0744">Spermatogenesis</keyword>
<keyword id="KW-0810">Translation regulation</keyword>
<organism>
    <name type="scientific">Gallus gallus</name>
    <name type="common">Chicken</name>
    <dbReference type="NCBI Taxonomy" id="9031"/>
    <lineage>
        <taxon>Eukaryota</taxon>
        <taxon>Metazoa</taxon>
        <taxon>Chordata</taxon>
        <taxon>Craniata</taxon>
        <taxon>Vertebrata</taxon>
        <taxon>Euteleostomi</taxon>
        <taxon>Archelosauria</taxon>
        <taxon>Archosauria</taxon>
        <taxon>Dinosauria</taxon>
        <taxon>Saurischia</taxon>
        <taxon>Theropoda</taxon>
        <taxon>Coelurosauria</taxon>
        <taxon>Aves</taxon>
        <taxon>Neognathae</taxon>
        <taxon>Galloanserae</taxon>
        <taxon>Galliformes</taxon>
        <taxon>Phasianidae</taxon>
        <taxon>Phasianinae</taxon>
        <taxon>Gallus</taxon>
    </lineage>
</organism>
<reference key="1">
    <citation type="submission" date="2003-01" db="EMBL/GenBank/DDBJ databases">
        <title>Isolation and characterization of a cDNA clone encoding the germ cell-specific RNA binding protein dazl (deleted in azoospermia-like) from the chicken ovary.</title>
        <authorList>
            <person name="Tsukada A."/>
            <person name="Kuroiwa A."/>
            <person name="Matsuda Y."/>
            <person name="Shimada K."/>
            <person name="Petitte J.N."/>
        </authorList>
    </citation>
    <scope>NUCLEOTIDE SEQUENCE [MRNA]</scope>
    <source>
        <tissue>Ovary</tissue>
    </source>
</reference>
<feature type="chain" id="PRO_0000081563" description="Deleted in azoospermia-like">
    <location>
        <begin position="1"/>
        <end position="289"/>
    </location>
</feature>
<feature type="domain" description="RRM" evidence="3">
    <location>
        <begin position="36"/>
        <end position="117"/>
    </location>
</feature>
<feature type="domain" description="DAZ" evidence="4">
    <location>
        <begin position="162"/>
        <end position="187"/>
    </location>
</feature>
<feature type="region of interest" description="Disordered" evidence="5">
    <location>
        <begin position="1"/>
        <end position="20"/>
    </location>
</feature>
<name>DAZL_CHICK</name>